<protein>
    <recommendedName>
        <fullName>Pathogenesis-related protein PR-4</fullName>
    </recommendedName>
    <alternativeName>
        <fullName>PpAz89</fullName>
    </alternativeName>
</protein>
<reference evidence="6" key="1">
    <citation type="journal article" date="2002" name="J. Exp. Bot.">
        <title>Ethylene-responsive genes are differentially regulated during abscission, organ senescence and wounding in peach (Prunus persica).</title>
        <authorList>
            <person name="Ruperti B."/>
            <person name="Cattivelli L."/>
            <person name="Pagni S."/>
            <person name="Ramina A."/>
        </authorList>
    </citation>
    <scope>NUCLEOTIDE SEQUENCE [MRNA]</scope>
    <scope>TISSUE SPECIFICITY</scope>
    <scope>DEVELOPMENTAL STAGE</scope>
    <scope>INDUCTION</scope>
    <source>
        <strain>cv. Springcrest</strain>
        <tissue>Abscission zone</tissue>
    </source>
</reference>
<accession>P83343</accession>
<keyword id="KW-0134">Cell wall</keyword>
<keyword id="KW-1015">Disulfide bond</keyword>
<keyword id="KW-0568">Pathogenesis-related protein</keyword>
<keyword id="KW-0611">Plant defense</keyword>
<keyword id="KW-0964">Secreted</keyword>
<comment type="function">
    <text evidence="5">May be involved in protecting plant tissues from pathogen infection.</text>
</comment>
<comment type="subcellular location">
    <subcellularLocation>
        <location evidence="2">Secreted</location>
        <location evidence="2">Cell wall</location>
    </subcellularLocation>
</comment>
<comment type="tissue specificity">
    <text evidence="4">Preferentially expressed in the tissue surrounding the abscission zone of fruitlets.</text>
</comment>
<comment type="developmental stage">
    <text evidence="4">Expressed during the late stages of both fruit ripening and leaf senescence.</text>
</comment>
<comment type="induction">
    <text evidence="4">Up-regulated in both the abscission zone and surrounding tissues following treatment with propylene and after wounding due to embryoctomy.</text>
</comment>
<evidence type="ECO:0000250" key="1"/>
<evidence type="ECO:0000250" key="2">
    <source>
        <dbReference type="UniProtKB" id="P85494"/>
    </source>
</evidence>
<evidence type="ECO:0000255" key="3">
    <source>
        <dbReference type="PROSITE-ProRule" id="PRU00527"/>
    </source>
</evidence>
<evidence type="ECO:0000269" key="4">
    <source>
    </source>
</evidence>
<evidence type="ECO:0000303" key="5">
    <source>
    </source>
</evidence>
<evidence type="ECO:0000305" key="6"/>
<evidence type="ECO:0000312" key="7">
    <source>
        <dbReference type="EMBL" id="AAM00217.1"/>
    </source>
</evidence>
<proteinExistence type="evidence at transcript level"/>
<sequence length="107" mass="11518">QNINWDLRTASVFCATWDADKPLSWRSKYGWTAFCGPVGPTGQDSCGKCLLVTNTGTGAKVTVRIVDQCSNGGLDLDVNVFNQIDTNGQGNAQGHLIVNYDFVDCGD</sequence>
<dbReference type="EMBL" id="AF362989">
    <property type="protein sequence ID" value="AAM00217.1"/>
    <property type="molecule type" value="mRNA"/>
</dbReference>
<dbReference type="SMR" id="P83343"/>
<dbReference type="eggNOG" id="KOG4742">
    <property type="taxonomic scope" value="Eukaryota"/>
</dbReference>
<dbReference type="GO" id="GO:0005576">
    <property type="term" value="C:extracellular region"/>
    <property type="evidence" value="ECO:0007669"/>
    <property type="project" value="UniProtKB-KW"/>
</dbReference>
<dbReference type="GO" id="GO:0004540">
    <property type="term" value="F:RNA nuclease activity"/>
    <property type="evidence" value="ECO:0007669"/>
    <property type="project" value="InterPro"/>
</dbReference>
<dbReference type="GO" id="GO:0006952">
    <property type="term" value="P:defense response"/>
    <property type="evidence" value="ECO:0000270"/>
    <property type="project" value="UniProtKB"/>
</dbReference>
<dbReference type="GO" id="GO:0042742">
    <property type="term" value="P:defense response to bacterium"/>
    <property type="evidence" value="ECO:0007669"/>
    <property type="project" value="InterPro"/>
</dbReference>
<dbReference type="GO" id="GO:0050832">
    <property type="term" value="P:defense response to fungus"/>
    <property type="evidence" value="ECO:0007669"/>
    <property type="project" value="InterPro"/>
</dbReference>
<dbReference type="Gene3D" id="2.40.40.10">
    <property type="entry name" value="RlpA-like domain"/>
    <property type="match status" value="1"/>
</dbReference>
<dbReference type="InterPro" id="IPR018226">
    <property type="entry name" value="Barwin_CS"/>
</dbReference>
<dbReference type="InterPro" id="IPR001153">
    <property type="entry name" value="Barwin_dom"/>
</dbReference>
<dbReference type="InterPro" id="IPR044301">
    <property type="entry name" value="PR4"/>
</dbReference>
<dbReference type="InterPro" id="IPR036908">
    <property type="entry name" value="RlpA-like_sf"/>
</dbReference>
<dbReference type="PANTHER" id="PTHR46351:SF7">
    <property type="entry name" value="HEVEIN-LIKE PREPROPROTEIN"/>
    <property type="match status" value="1"/>
</dbReference>
<dbReference type="PANTHER" id="PTHR46351">
    <property type="entry name" value="WOUND-INDUCED PROTEIN WIN2"/>
    <property type="match status" value="1"/>
</dbReference>
<dbReference type="Pfam" id="PF00967">
    <property type="entry name" value="Barwin"/>
    <property type="match status" value="1"/>
</dbReference>
<dbReference type="PRINTS" id="PR00602">
    <property type="entry name" value="BARWIN"/>
</dbReference>
<dbReference type="SUPFAM" id="SSF50685">
    <property type="entry name" value="Barwin-like endoglucanases"/>
    <property type="match status" value="1"/>
</dbReference>
<dbReference type="PROSITE" id="PS00771">
    <property type="entry name" value="BARWIN_1"/>
    <property type="match status" value="1"/>
</dbReference>
<dbReference type="PROSITE" id="PS00772">
    <property type="entry name" value="BARWIN_2"/>
    <property type="match status" value="1"/>
</dbReference>
<dbReference type="PROSITE" id="PS51174">
    <property type="entry name" value="BARWIN_3"/>
    <property type="match status" value="1"/>
</dbReference>
<organism evidence="7">
    <name type="scientific">Prunus persica</name>
    <name type="common">Peach</name>
    <name type="synonym">Amygdalus persica</name>
    <dbReference type="NCBI Taxonomy" id="3760"/>
    <lineage>
        <taxon>Eukaryota</taxon>
        <taxon>Viridiplantae</taxon>
        <taxon>Streptophyta</taxon>
        <taxon>Embryophyta</taxon>
        <taxon>Tracheophyta</taxon>
        <taxon>Spermatophyta</taxon>
        <taxon>Magnoliopsida</taxon>
        <taxon>eudicotyledons</taxon>
        <taxon>Gunneridae</taxon>
        <taxon>Pentapetalae</taxon>
        <taxon>rosids</taxon>
        <taxon>fabids</taxon>
        <taxon>Rosales</taxon>
        <taxon>Rosaceae</taxon>
        <taxon>Amygdaloideae</taxon>
        <taxon>Amygdaleae</taxon>
        <taxon>Prunus</taxon>
    </lineage>
</organism>
<feature type="chain" id="PRO_0000164262" description="Pathogenesis-related protein PR-4">
    <location>
        <begin position="1" status="less than"/>
        <end position="107"/>
    </location>
</feature>
<feature type="domain" description="Barwin" evidence="3">
    <location>
        <begin position="1" status="less than"/>
        <end position="107"/>
    </location>
</feature>
<feature type="disulfide bond" evidence="1">
    <location>
        <begin position="14"/>
        <end position="46"/>
    </location>
</feature>
<feature type="disulfide bond" evidence="1">
    <location>
        <begin position="35"/>
        <end position="69"/>
    </location>
</feature>
<feature type="disulfide bond" evidence="1">
    <location>
        <begin position="49"/>
        <end position="105"/>
    </location>
</feature>
<feature type="non-terminal residue" evidence="7">
    <location>
        <position position="1"/>
    </location>
</feature>
<name>PR4_PRUPE</name>